<evidence type="ECO:0000255" key="1">
    <source>
        <dbReference type="HAMAP-Rule" id="MF_00046"/>
    </source>
</evidence>
<accession>B6J5K2</accession>
<gene>
    <name evidence="1" type="primary">murC</name>
    <name type="ordered locus">CbuK_1918</name>
</gene>
<proteinExistence type="inferred from homology"/>
<organism>
    <name type="scientific">Coxiella burnetii (strain CbuK_Q154)</name>
    <name type="common">Coxiella burnetii (strain Q154)</name>
    <dbReference type="NCBI Taxonomy" id="434924"/>
    <lineage>
        <taxon>Bacteria</taxon>
        <taxon>Pseudomonadati</taxon>
        <taxon>Pseudomonadota</taxon>
        <taxon>Gammaproteobacteria</taxon>
        <taxon>Legionellales</taxon>
        <taxon>Coxiellaceae</taxon>
        <taxon>Coxiella</taxon>
    </lineage>
</organism>
<feature type="chain" id="PRO_1000091094" description="UDP-N-acetylmuramate--L-alanine ligase">
    <location>
        <begin position="1"/>
        <end position="465"/>
    </location>
</feature>
<feature type="binding site" evidence="1">
    <location>
        <begin position="115"/>
        <end position="121"/>
    </location>
    <ligand>
        <name>ATP</name>
        <dbReference type="ChEBI" id="CHEBI:30616"/>
    </ligand>
</feature>
<protein>
    <recommendedName>
        <fullName evidence="1">UDP-N-acetylmuramate--L-alanine ligase</fullName>
        <ecNumber evidence="1">6.3.2.8</ecNumber>
    </recommendedName>
    <alternativeName>
        <fullName evidence="1">UDP-N-acetylmuramoyl-L-alanine synthetase</fullName>
    </alternativeName>
</protein>
<dbReference type="EC" id="6.3.2.8" evidence="1"/>
<dbReference type="EMBL" id="CP001020">
    <property type="protein sequence ID" value="ACJ21028.1"/>
    <property type="molecule type" value="Genomic_DNA"/>
</dbReference>
<dbReference type="RefSeq" id="WP_005769486.1">
    <property type="nucleotide sequence ID" value="NC_011528.1"/>
</dbReference>
<dbReference type="SMR" id="B6J5K2"/>
<dbReference type="KEGG" id="cbc:CbuK_1918"/>
<dbReference type="HOGENOM" id="CLU_028104_2_2_6"/>
<dbReference type="UniPathway" id="UPA00219"/>
<dbReference type="GO" id="GO:0005737">
    <property type="term" value="C:cytoplasm"/>
    <property type="evidence" value="ECO:0007669"/>
    <property type="project" value="UniProtKB-SubCell"/>
</dbReference>
<dbReference type="GO" id="GO:0005524">
    <property type="term" value="F:ATP binding"/>
    <property type="evidence" value="ECO:0007669"/>
    <property type="project" value="UniProtKB-UniRule"/>
</dbReference>
<dbReference type="GO" id="GO:0008763">
    <property type="term" value="F:UDP-N-acetylmuramate-L-alanine ligase activity"/>
    <property type="evidence" value="ECO:0007669"/>
    <property type="project" value="UniProtKB-UniRule"/>
</dbReference>
<dbReference type="GO" id="GO:0051301">
    <property type="term" value="P:cell division"/>
    <property type="evidence" value="ECO:0007669"/>
    <property type="project" value="UniProtKB-KW"/>
</dbReference>
<dbReference type="GO" id="GO:0071555">
    <property type="term" value="P:cell wall organization"/>
    <property type="evidence" value="ECO:0007669"/>
    <property type="project" value="UniProtKB-KW"/>
</dbReference>
<dbReference type="GO" id="GO:0009252">
    <property type="term" value="P:peptidoglycan biosynthetic process"/>
    <property type="evidence" value="ECO:0007669"/>
    <property type="project" value="UniProtKB-UniRule"/>
</dbReference>
<dbReference type="GO" id="GO:0008360">
    <property type="term" value="P:regulation of cell shape"/>
    <property type="evidence" value="ECO:0007669"/>
    <property type="project" value="UniProtKB-KW"/>
</dbReference>
<dbReference type="Gene3D" id="3.90.190.20">
    <property type="entry name" value="Mur ligase, C-terminal domain"/>
    <property type="match status" value="1"/>
</dbReference>
<dbReference type="Gene3D" id="3.40.1190.10">
    <property type="entry name" value="Mur-like, catalytic domain"/>
    <property type="match status" value="1"/>
</dbReference>
<dbReference type="Gene3D" id="3.40.50.720">
    <property type="entry name" value="NAD(P)-binding Rossmann-like Domain"/>
    <property type="match status" value="1"/>
</dbReference>
<dbReference type="HAMAP" id="MF_00046">
    <property type="entry name" value="MurC"/>
    <property type="match status" value="1"/>
</dbReference>
<dbReference type="InterPro" id="IPR036565">
    <property type="entry name" value="Mur-like_cat_sf"/>
</dbReference>
<dbReference type="InterPro" id="IPR004101">
    <property type="entry name" value="Mur_ligase_C"/>
</dbReference>
<dbReference type="InterPro" id="IPR036615">
    <property type="entry name" value="Mur_ligase_C_dom_sf"/>
</dbReference>
<dbReference type="InterPro" id="IPR013221">
    <property type="entry name" value="Mur_ligase_cen"/>
</dbReference>
<dbReference type="InterPro" id="IPR000713">
    <property type="entry name" value="Mur_ligase_N"/>
</dbReference>
<dbReference type="InterPro" id="IPR050061">
    <property type="entry name" value="MurCDEF_pg_biosynth"/>
</dbReference>
<dbReference type="InterPro" id="IPR005758">
    <property type="entry name" value="UDP-N-AcMur_Ala_ligase_MurC"/>
</dbReference>
<dbReference type="NCBIfam" id="TIGR01082">
    <property type="entry name" value="murC"/>
    <property type="match status" value="1"/>
</dbReference>
<dbReference type="PANTHER" id="PTHR43445:SF3">
    <property type="entry name" value="UDP-N-ACETYLMURAMATE--L-ALANINE LIGASE"/>
    <property type="match status" value="1"/>
</dbReference>
<dbReference type="PANTHER" id="PTHR43445">
    <property type="entry name" value="UDP-N-ACETYLMURAMATE--L-ALANINE LIGASE-RELATED"/>
    <property type="match status" value="1"/>
</dbReference>
<dbReference type="Pfam" id="PF01225">
    <property type="entry name" value="Mur_ligase"/>
    <property type="match status" value="1"/>
</dbReference>
<dbReference type="Pfam" id="PF02875">
    <property type="entry name" value="Mur_ligase_C"/>
    <property type="match status" value="1"/>
</dbReference>
<dbReference type="Pfam" id="PF08245">
    <property type="entry name" value="Mur_ligase_M"/>
    <property type="match status" value="1"/>
</dbReference>
<dbReference type="SUPFAM" id="SSF51984">
    <property type="entry name" value="MurCD N-terminal domain"/>
    <property type="match status" value="1"/>
</dbReference>
<dbReference type="SUPFAM" id="SSF53623">
    <property type="entry name" value="MurD-like peptide ligases, catalytic domain"/>
    <property type="match status" value="1"/>
</dbReference>
<dbReference type="SUPFAM" id="SSF53244">
    <property type="entry name" value="MurD-like peptide ligases, peptide-binding domain"/>
    <property type="match status" value="1"/>
</dbReference>
<sequence length="465" mass="50668">MQLDKKIINHVHCLGIGGIGVSALAEILLKKGCRVTGSDVSPNKNTERLQRLGAEIIFNHDGTAITQADCAVYSSAIGATNPELMAAKQAKIPLLKRGEMLANLMKEYQSIAVAGAHGKTTTSGMLSHAFVEANLDPTFMVGGVLNNSQTPARVGNGHYFIAEADESDASFLFMHPDIAVVTNIDADHLSTYDGDFNRLKQTYIQFLEQTAQDGVVVLCLDDPILREIAPLLSRRVITYGFSSDAQYRVVDYCQQGIQSLFQIHSPQRKAPLTVKLSMPGQHNALNATAVTAIADVVRMNEPALLKSLADFPGVDRRFTIRGEMILPKGNALIIEDYGHHPNEIKATLAAARAAWPERRMVLVFQPHRYSRTRDLMTEFVSVLAETDWLVLLEVYSAGEMPIPGADGMALIKMMSNGMAQKTTFVPLLQNLPETLQKLSQPNDIIILQGAGNIGSIVTALVQTHG</sequence>
<name>MURC_COXB1</name>
<keyword id="KW-0067">ATP-binding</keyword>
<keyword id="KW-0131">Cell cycle</keyword>
<keyword id="KW-0132">Cell division</keyword>
<keyword id="KW-0133">Cell shape</keyword>
<keyword id="KW-0961">Cell wall biogenesis/degradation</keyword>
<keyword id="KW-0963">Cytoplasm</keyword>
<keyword id="KW-0436">Ligase</keyword>
<keyword id="KW-0547">Nucleotide-binding</keyword>
<keyword id="KW-0573">Peptidoglycan synthesis</keyword>
<reference key="1">
    <citation type="journal article" date="2009" name="Infect. Immun.">
        <title>Comparative genomics reveal extensive transposon-mediated genomic plasticity and diversity among potential effector proteins within the genus Coxiella.</title>
        <authorList>
            <person name="Beare P.A."/>
            <person name="Unsworth N."/>
            <person name="Andoh M."/>
            <person name="Voth D.E."/>
            <person name="Omsland A."/>
            <person name="Gilk S.D."/>
            <person name="Williams K.P."/>
            <person name="Sobral B.W."/>
            <person name="Kupko J.J. III"/>
            <person name="Porcella S.F."/>
            <person name="Samuel J.E."/>
            <person name="Heinzen R.A."/>
        </authorList>
    </citation>
    <scope>NUCLEOTIDE SEQUENCE [LARGE SCALE GENOMIC DNA]</scope>
    <source>
        <strain>CbuK_Q154</strain>
    </source>
</reference>
<comment type="function">
    <text evidence="1">Cell wall formation.</text>
</comment>
<comment type="catalytic activity">
    <reaction evidence="1">
        <text>UDP-N-acetyl-alpha-D-muramate + L-alanine + ATP = UDP-N-acetyl-alpha-D-muramoyl-L-alanine + ADP + phosphate + H(+)</text>
        <dbReference type="Rhea" id="RHEA:23372"/>
        <dbReference type="ChEBI" id="CHEBI:15378"/>
        <dbReference type="ChEBI" id="CHEBI:30616"/>
        <dbReference type="ChEBI" id="CHEBI:43474"/>
        <dbReference type="ChEBI" id="CHEBI:57972"/>
        <dbReference type="ChEBI" id="CHEBI:70757"/>
        <dbReference type="ChEBI" id="CHEBI:83898"/>
        <dbReference type="ChEBI" id="CHEBI:456216"/>
        <dbReference type="EC" id="6.3.2.8"/>
    </reaction>
</comment>
<comment type="pathway">
    <text evidence="1">Cell wall biogenesis; peptidoglycan biosynthesis.</text>
</comment>
<comment type="subcellular location">
    <subcellularLocation>
        <location evidence="1">Cytoplasm</location>
    </subcellularLocation>
</comment>
<comment type="similarity">
    <text evidence="1">Belongs to the MurCDEF family.</text>
</comment>